<organism>
    <name type="scientific">Pseudomonas aeruginosa (strain ATCC 15692 / DSM 22644 / CIP 104116 / JCM 14847 / LMG 12228 / 1C / PRS 101 / PAO1)</name>
    <dbReference type="NCBI Taxonomy" id="208964"/>
    <lineage>
        <taxon>Bacteria</taxon>
        <taxon>Pseudomonadati</taxon>
        <taxon>Pseudomonadota</taxon>
        <taxon>Gammaproteobacteria</taxon>
        <taxon>Pseudomonadales</taxon>
        <taxon>Pseudomonadaceae</taxon>
        <taxon>Pseudomonas</taxon>
    </lineage>
</organism>
<evidence type="ECO:0000305" key="1"/>
<evidence type="ECO:0007829" key="2">
    <source>
        <dbReference type="PDB" id="2HDW"/>
    </source>
</evidence>
<sequence length="371" mass="40840">MENAMETKHSNRARSRKGALRGAVLAGALMALVGCQTSPAATTSSNTGGTNMQLQLTQEWDKTFPLSAKVEHRKVTFANRYGITLAADLYLPKNRGGDRLPAIVIGGPFGAVKEQSSGLYAQTMAERGFVTLAFDPSYTGESGGQPRNVASPDINTEDFSAAVDFISLLPEVNRERIGVIGICGWGGMALNAVAVDKRVKAVVTSTMYDMTRVMSKGYNDSVTLEQRTRTLEQLGQQRWKDAESGTPAYQPPYNELKGGEAQFLVDYHDYYMTPRGYHPRAVNSGNAWTMTTPLSFMNMPILTYIKEISPRPILLIHGERAHSRYFSETAYAAAAEPKELLIVPGASHVDLYDRLDRIPFDRIAGFFDEHL</sequence>
<dbReference type="EMBL" id="Z14064">
    <property type="protein sequence ID" value="CAA78447.1"/>
    <property type="molecule type" value="Genomic_DNA"/>
</dbReference>
<dbReference type="EMBL" id="AE004091">
    <property type="protein sequence ID" value="AAG05606.1"/>
    <property type="status" value="ALT_INIT"/>
    <property type="molecule type" value="Genomic_DNA"/>
</dbReference>
<dbReference type="PIR" id="G83368">
    <property type="entry name" value="G83368"/>
</dbReference>
<dbReference type="PIR" id="S23861">
    <property type="entry name" value="S23861"/>
</dbReference>
<dbReference type="RefSeq" id="NP_250908.1">
    <property type="nucleotide sequence ID" value="NC_002516.2"/>
</dbReference>
<dbReference type="PDB" id="2HDW">
    <property type="method" value="X-ray"/>
    <property type="resolution" value="2.00 A"/>
    <property type="chains" value="A/B=5-371"/>
</dbReference>
<dbReference type="PDBsum" id="2HDW"/>
<dbReference type="SMR" id="Q01609"/>
<dbReference type="FunCoup" id="Q01609">
    <property type="interactions" value="35"/>
</dbReference>
<dbReference type="STRING" id="208964.PA2218"/>
<dbReference type="ESTHER" id="pseae-Y2218">
    <property type="family name" value="YcjY-like"/>
</dbReference>
<dbReference type="PaxDb" id="208964-PA2218"/>
<dbReference type="DNASU" id="879452"/>
<dbReference type="GeneID" id="879452"/>
<dbReference type="KEGG" id="pae:PA2218"/>
<dbReference type="PATRIC" id="fig|208964.12.peg.2322"/>
<dbReference type="PseudoCAP" id="PA2218"/>
<dbReference type="HOGENOM" id="CLU_048587_0_1_6"/>
<dbReference type="InParanoid" id="Q01609"/>
<dbReference type="OrthoDB" id="9805123at2"/>
<dbReference type="PhylomeDB" id="Q01609"/>
<dbReference type="EvolutionaryTrace" id="Q01609"/>
<dbReference type="Proteomes" id="UP000002438">
    <property type="component" value="Chromosome"/>
</dbReference>
<dbReference type="GO" id="GO:0016787">
    <property type="term" value="F:hydrolase activity"/>
    <property type="evidence" value="ECO:0007669"/>
    <property type="project" value="InterPro"/>
</dbReference>
<dbReference type="FunFam" id="1.10.10.800:FF:000002">
    <property type="entry name" value="OpdE downstream ORF 2, putative"/>
    <property type="match status" value="1"/>
</dbReference>
<dbReference type="Gene3D" id="1.10.10.800">
    <property type="match status" value="1"/>
</dbReference>
<dbReference type="Gene3D" id="3.40.50.1820">
    <property type="entry name" value="alpha/beta hydrolase"/>
    <property type="match status" value="1"/>
</dbReference>
<dbReference type="InterPro" id="IPR029058">
    <property type="entry name" value="AB_hydrolase_fold"/>
</dbReference>
<dbReference type="InterPro" id="IPR051411">
    <property type="entry name" value="Polyketide_trans_af380"/>
</dbReference>
<dbReference type="InterPro" id="IPR011108">
    <property type="entry name" value="RMMBL"/>
</dbReference>
<dbReference type="InterPro" id="IPR000383">
    <property type="entry name" value="Xaa-Pro-like_dom"/>
</dbReference>
<dbReference type="PANTHER" id="PTHR47751">
    <property type="entry name" value="SUPERFAMILY HYDROLASE, PUTATIVE (AFU_ORTHOLOGUE AFUA_2G16580)-RELATED"/>
    <property type="match status" value="1"/>
</dbReference>
<dbReference type="PANTHER" id="PTHR47751:SF1">
    <property type="entry name" value="SUPERFAMILY HYDROLASE, PUTATIVE (AFU_ORTHOLOGUE AFUA_2G16580)-RELATED"/>
    <property type="match status" value="1"/>
</dbReference>
<dbReference type="Pfam" id="PF02129">
    <property type="entry name" value="Peptidase_S15"/>
    <property type="match status" value="1"/>
</dbReference>
<dbReference type="Pfam" id="PF07521">
    <property type="entry name" value="RMMBL"/>
    <property type="match status" value="1"/>
</dbReference>
<dbReference type="SUPFAM" id="SSF53474">
    <property type="entry name" value="alpha/beta-Hydrolases"/>
    <property type="match status" value="1"/>
</dbReference>
<keyword id="KW-0002">3D-structure</keyword>
<keyword id="KW-1185">Reference proteome</keyword>
<proteinExistence type="evidence at protein level"/>
<accession>Q01609</accession>
<accession>Q9I1P9</accession>
<reference key="1">
    <citation type="journal article" date="1992" name="FEMS Microbiol. Lett.">
        <title>Analysis of two gene regions involved in the expression of the imipenem-specific, outer membrane porin protein OprD of Pseudomonas aeruginosa.</title>
        <authorList>
            <person name="Huang H."/>
            <person name="Siehnel R.J."/>
            <person name="Bellido F."/>
            <person name="Rawling E."/>
            <person name="Hancock R.E.W."/>
        </authorList>
    </citation>
    <scope>NUCLEOTIDE SEQUENCE [GENOMIC DNA]</scope>
    <source>
        <strain>ATCC 15692 / PAO1 / H103</strain>
    </source>
</reference>
<reference key="2">
    <citation type="journal article" date="2000" name="Nature">
        <title>Complete genome sequence of Pseudomonas aeruginosa PAO1, an opportunistic pathogen.</title>
        <authorList>
            <person name="Stover C.K."/>
            <person name="Pham X.-Q.T."/>
            <person name="Erwin A.L."/>
            <person name="Mizoguchi S.D."/>
            <person name="Warrener P."/>
            <person name="Hickey M.J."/>
            <person name="Brinkman F.S.L."/>
            <person name="Hufnagle W.O."/>
            <person name="Kowalik D.J."/>
            <person name="Lagrou M."/>
            <person name="Garber R.L."/>
            <person name="Goltry L."/>
            <person name="Tolentino E."/>
            <person name="Westbrock-Wadman S."/>
            <person name="Yuan Y."/>
            <person name="Brody L.L."/>
            <person name="Coulter S.N."/>
            <person name="Folger K.R."/>
            <person name="Kas A."/>
            <person name="Larbig K."/>
            <person name="Lim R.M."/>
            <person name="Smith K.A."/>
            <person name="Spencer D.H."/>
            <person name="Wong G.K.-S."/>
            <person name="Wu Z."/>
            <person name="Paulsen I.T."/>
            <person name="Reizer J."/>
            <person name="Saier M.H. Jr."/>
            <person name="Hancock R.E.W."/>
            <person name="Lory S."/>
            <person name="Olson M.V."/>
        </authorList>
    </citation>
    <scope>NUCLEOTIDE SEQUENCE [LARGE SCALE GENOMIC DNA]</scope>
    <source>
        <strain>ATCC 15692 / DSM 22644 / CIP 104116 / JCM 14847 / LMG 12228 / 1C / PRS 101 / PAO1</strain>
    </source>
</reference>
<gene>
    <name type="ordered locus">PA2218</name>
</gene>
<name>Y2218_PSEAE</name>
<protein>
    <recommendedName>
        <fullName>Uncharacterized protein PA2218</fullName>
    </recommendedName>
</protein>
<comment type="similarity">
    <text evidence="1">To E.coli YcjY.</text>
</comment>
<comment type="sequence caution" evidence="1">
    <conflict type="erroneous initiation">
        <sequence resource="EMBL-CDS" id="AAG05606"/>
    </conflict>
</comment>
<feature type="chain" id="PRO_0000206254" description="Uncharacterized protein PA2218">
    <location>
        <begin position="1"/>
        <end position="371"/>
    </location>
</feature>
<feature type="sequence conflict" description="In Ref. 1; CAA78447." evidence="1" ref="1">
    <original>R</original>
    <variation>P</variation>
    <location>
        <position position="16"/>
    </location>
</feature>
<feature type="sequence conflict" description="In Ref. 1; CAA78447." evidence="1" ref="1">
    <original>R</original>
    <variation>P</variation>
    <location>
        <position position="73"/>
    </location>
</feature>
<feature type="sequence conflict" description="In Ref. 1; CAA78447." evidence="1" ref="1">
    <original>A</original>
    <variation>G</variation>
    <location>
        <position position="261"/>
    </location>
</feature>
<feature type="strand" evidence="2">
    <location>
        <begin position="70"/>
        <end position="78"/>
    </location>
</feature>
<feature type="strand" evidence="2">
    <location>
        <begin position="84"/>
        <end position="94"/>
    </location>
</feature>
<feature type="strand" evidence="2">
    <location>
        <begin position="100"/>
        <end position="106"/>
    </location>
</feature>
<feature type="helix" evidence="2">
    <location>
        <begin position="116"/>
        <end position="126"/>
    </location>
</feature>
<feature type="strand" evidence="2">
    <location>
        <begin position="130"/>
        <end position="134"/>
    </location>
</feature>
<feature type="strand" evidence="2">
    <location>
        <begin position="145"/>
        <end position="148"/>
    </location>
</feature>
<feature type="helix" evidence="2">
    <location>
        <begin position="152"/>
        <end position="168"/>
    </location>
</feature>
<feature type="strand" evidence="2">
    <location>
        <begin position="172"/>
        <end position="182"/>
    </location>
</feature>
<feature type="helix" evidence="2">
    <location>
        <begin position="185"/>
        <end position="195"/>
    </location>
</feature>
<feature type="strand" evidence="2">
    <location>
        <begin position="201"/>
        <end position="206"/>
    </location>
</feature>
<feature type="helix" evidence="2">
    <location>
        <begin position="210"/>
        <end position="216"/>
    </location>
</feature>
<feature type="turn" evidence="2">
    <location>
        <begin position="217"/>
        <end position="220"/>
    </location>
</feature>
<feature type="helix" evidence="2">
    <location>
        <begin position="224"/>
        <end position="244"/>
    </location>
</feature>
<feature type="helix" evidence="2">
    <location>
        <begin position="262"/>
        <end position="271"/>
    </location>
</feature>
<feature type="turn" evidence="2">
    <location>
        <begin position="274"/>
        <end position="276"/>
    </location>
</feature>
<feature type="turn" evidence="2">
    <location>
        <begin position="283"/>
        <end position="285"/>
    </location>
</feature>
<feature type="turn" evidence="2">
    <location>
        <begin position="290"/>
        <end position="292"/>
    </location>
</feature>
<feature type="helix" evidence="2">
    <location>
        <begin position="293"/>
        <end position="296"/>
    </location>
</feature>
<feature type="helix" evidence="2">
    <location>
        <begin position="305"/>
        <end position="308"/>
    </location>
</feature>
<feature type="strand" evidence="2">
    <location>
        <begin position="313"/>
        <end position="318"/>
    </location>
</feature>
<feature type="helix" evidence="2">
    <location>
        <begin position="324"/>
        <end position="333"/>
    </location>
</feature>
<feature type="strand" evidence="2">
    <location>
        <begin position="336"/>
        <end position="343"/>
    </location>
</feature>
<feature type="helix" evidence="2">
    <location>
        <begin position="350"/>
        <end position="353"/>
    </location>
</feature>
<feature type="turn" evidence="2">
    <location>
        <begin position="355"/>
        <end position="357"/>
    </location>
</feature>
<feature type="helix" evidence="2">
    <location>
        <begin position="360"/>
        <end position="370"/>
    </location>
</feature>